<comment type="function">
    <text evidence="3 5 6">Catalyzes the hydrolysis of endogenous amidated lipids like the endocannabinoid anandamide (N-(5Z,8Z,11Z,14Z-eicosatetraenoyl)-ethanolamine), as well as other fatty amides such as the taurine-conjugated fatty acids (a structural class of central nervous system (CNS) metabolites), to their corresponding fatty acids, thereby regulating the signaling functions of these molecules (PubMed:15533037, PubMed:32271712). FAAH cooperates with PM20D1 in the hydrolysis of amino acid-conjugated fatty acids such as N-fatty acyl glycine and N-fatty acyl-L-serine, thereby acting as a physiological regulator of specific subsets of intracellular, but not of extracellular, N-fatty acyl amino acids (PubMed:32271712). It can also catalyze the hydrolysis of the endocannabinoid 2-arachidonoylglycerol (2-(5Z,8Z,11Z,14Z-eicosatetraenoyl)-glycerol) (By similarity).</text>
</comment>
<comment type="catalytic activity">
    <reaction evidence="5 6">
        <text>N-(5Z,8Z,11Z,14Z-eicosatetraenoyl)-ethanolamine + H2O = ethanolamine + (5Z,8Z,11Z,14Z)-eicosatetraenoate</text>
        <dbReference type="Rhea" id="RHEA:26136"/>
        <dbReference type="ChEBI" id="CHEBI:2700"/>
        <dbReference type="ChEBI" id="CHEBI:15377"/>
        <dbReference type="ChEBI" id="CHEBI:32395"/>
        <dbReference type="ChEBI" id="CHEBI:57603"/>
        <dbReference type="EC" id="3.5.1.99"/>
    </reaction>
    <physiologicalReaction direction="left-to-right" evidence="5 6">
        <dbReference type="Rhea" id="RHEA:26137"/>
    </physiologicalReaction>
</comment>
<comment type="catalytic activity">
    <reaction evidence="3">
        <text>(9Z)-octadecenamide + H2O = (9Z)-octadecenoate + NH4(+)</text>
        <dbReference type="Rhea" id="RHEA:26506"/>
        <dbReference type="ChEBI" id="CHEBI:15377"/>
        <dbReference type="ChEBI" id="CHEBI:28938"/>
        <dbReference type="ChEBI" id="CHEBI:30823"/>
        <dbReference type="ChEBI" id="CHEBI:116314"/>
        <dbReference type="EC" id="3.5.1.99"/>
    </reaction>
    <physiologicalReaction direction="left-to-right" evidence="3">
        <dbReference type="Rhea" id="RHEA:26507"/>
    </physiologicalReaction>
</comment>
<comment type="catalytic activity">
    <reaction evidence="3">
        <text>2-(5Z,8Z,11Z,14Z-eicosatetraenoyl)-glycerol + H2O = glycerol + (5Z,8Z,11Z,14Z)-eicosatetraenoate + H(+)</text>
        <dbReference type="Rhea" id="RHEA:26132"/>
        <dbReference type="ChEBI" id="CHEBI:15377"/>
        <dbReference type="ChEBI" id="CHEBI:15378"/>
        <dbReference type="ChEBI" id="CHEBI:17754"/>
        <dbReference type="ChEBI" id="CHEBI:32395"/>
        <dbReference type="ChEBI" id="CHEBI:52392"/>
    </reaction>
    <physiologicalReaction direction="left-to-right" evidence="3">
        <dbReference type="Rhea" id="RHEA:26133"/>
    </physiologicalReaction>
</comment>
<comment type="catalytic activity">
    <reaction evidence="5">
        <text>N-(9Z-hexadecenoyl) ethanolamine + H2O = (9Z)-hexadecenoate + ethanolamine</text>
        <dbReference type="Rhea" id="RHEA:35563"/>
        <dbReference type="ChEBI" id="CHEBI:15377"/>
        <dbReference type="ChEBI" id="CHEBI:32372"/>
        <dbReference type="ChEBI" id="CHEBI:57603"/>
        <dbReference type="ChEBI" id="CHEBI:71465"/>
    </reaction>
    <physiologicalReaction direction="left-to-right" evidence="5">
        <dbReference type="Rhea" id="RHEA:35564"/>
    </physiologicalReaction>
</comment>
<comment type="catalytic activity">
    <reaction evidence="5">
        <text>N-(9Z-octadecenoyl) ethanolamine + H2O = ethanolamine + (9Z)-octadecenoate</text>
        <dbReference type="Rhea" id="RHEA:45060"/>
        <dbReference type="ChEBI" id="CHEBI:15377"/>
        <dbReference type="ChEBI" id="CHEBI:30823"/>
        <dbReference type="ChEBI" id="CHEBI:57603"/>
        <dbReference type="ChEBI" id="CHEBI:71466"/>
    </reaction>
    <physiologicalReaction direction="left-to-right" evidence="5">
        <dbReference type="Rhea" id="RHEA:45061"/>
    </physiologicalReaction>
</comment>
<comment type="catalytic activity">
    <reaction evidence="5">
        <text>N-octadecanoyl ethanolamine + H2O = octadecanoate + ethanolamine</text>
        <dbReference type="Rhea" id="RHEA:63124"/>
        <dbReference type="ChEBI" id="CHEBI:15377"/>
        <dbReference type="ChEBI" id="CHEBI:25629"/>
        <dbReference type="ChEBI" id="CHEBI:57603"/>
        <dbReference type="ChEBI" id="CHEBI:85299"/>
    </reaction>
    <physiologicalReaction direction="left-to-right" evidence="5">
        <dbReference type="Rhea" id="RHEA:63125"/>
    </physiologicalReaction>
</comment>
<comment type="catalytic activity">
    <reaction evidence="5">
        <text>N-docosanoyl-ethanolamine + H2O = docosanoate + ethanolamine</text>
        <dbReference type="Rhea" id="RHEA:63128"/>
        <dbReference type="ChEBI" id="CHEBI:15377"/>
        <dbReference type="ChEBI" id="CHEBI:23858"/>
        <dbReference type="ChEBI" id="CHEBI:57603"/>
        <dbReference type="ChEBI" id="CHEBI:146186"/>
    </reaction>
    <physiologicalReaction direction="left-to-right" evidence="5">
        <dbReference type="Rhea" id="RHEA:63129"/>
    </physiologicalReaction>
</comment>
<comment type="catalytic activity">
    <reaction evidence="5">
        <text>N-tetracosanoyl-taurine + H2O = tetracosanoate + taurine</text>
        <dbReference type="Rhea" id="RHEA:63140"/>
        <dbReference type="ChEBI" id="CHEBI:15377"/>
        <dbReference type="ChEBI" id="CHEBI:31014"/>
        <dbReference type="ChEBI" id="CHEBI:132049"/>
        <dbReference type="ChEBI" id="CHEBI:507393"/>
    </reaction>
    <physiologicalReaction direction="left-to-right" evidence="5">
        <dbReference type="Rhea" id="RHEA:63141"/>
    </physiologicalReaction>
</comment>
<comment type="catalytic activity">
    <reaction evidence="8">
        <text>N-(15Z-tetracosenoyl)-ethanolamine + H2O = (15Z)-tetracosenoate + ethanolamine</text>
        <dbReference type="Rhea" id="RHEA:63144"/>
        <dbReference type="ChEBI" id="CHEBI:15377"/>
        <dbReference type="ChEBI" id="CHEBI:32392"/>
        <dbReference type="ChEBI" id="CHEBI:57603"/>
        <dbReference type="ChEBI" id="CHEBI:146187"/>
    </reaction>
    <physiologicalReaction direction="left-to-right" evidence="8">
        <dbReference type="Rhea" id="RHEA:63145"/>
    </physiologicalReaction>
</comment>
<comment type="catalytic activity">
    <reaction evidence="8">
        <text>N-(9Z-octadecenoyl)-taurine + H2O = taurine + (9Z)-octadecenoate</text>
        <dbReference type="Rhea" id="RHEA:63148"/>
        <dbReference type="ChEBI" id="CHEBI:15377"/>
        <dbReference type="ChEBI" id="CHEBI:30823"/>
        <dbReference type="ChEBI" id="CHEBI:146191"/>
        <dbReference type="ChEBI" id="CHEBI:507393"/>
    </reaction>
    <physiologicalReaction direction="left-to-right" evidence="8">
        <dbReference type="Rhea" id="RHEA:63149"/>
    </physiologicalReaction>
</comment>
<comment type="catalytic activity">
    <reaction evidence="5">
        <text>N-docosanoyl-taurine + H2O = docosanoate + taurine</text>
        <dbReference type="Rhea" id="RHEA:63156"/>
        <dbReference type="ChEBI" id="CHEBI:15377"/>
        <dbReference type="ChEBI" id="CHEBI:23858"/>
        <dbReference type="ChEBI" id="CHEBI:146196"/>
        <dbReference type="ChEBI" id="CHEBI:507393"/>
    </reaction>
    <physiologicalReaction direction="left-to-right" evidence="5">
        <dbReference type="Rhea" id="RHEA:63157"/>
    </physiologicalReaction>
</comment>
<comment type="catalytic activity">
    <reaction evidence="8">
        <text>N-(15Z-tetracosenoyl)-taurine + H2O = (15Z)-tetracosenoate + taurine</text>
        <dbReference type="Rhea" id="RHEA:63160"/>
        <dbReference type="ChEBI" id="CHEBI:15377"/>
        <dbReference type="ChEBI" id="CHEBI:32392"/>
        <dbReference type="ChEBI" id="CHEBI:146198"/>
        <dbReference type="ChEBI" id="CHEBI:507393"/>
    </reaction>
    <physiologicalReaction direction="left-to-right" evidence="8">
        <dbReference type="Rhea" id="RHEA:63161"/>
    </physiologicalReaction>
</comment>
<comment type="catalytic activity">
    <reaction evidence="5">
        <text>N-tricosanoyl-taurine + H2O = tricosanoate + taurine</text>
        <dbReference type="Rhea" id="RHEA:63164"/>
        <dbReference type="ChEBI" id="CHEBI:15377"/>
        <dbReference type="ChEBI" id="CHEBI:79007"/>
        <dbReference type="ChEBI" id="CHEBI:146197"/>
        <dbReference type="ChEBI" id="CHEBI:507393"/>
    </reaction>
    <physiologicalReaction direction="left-to-right" evidence="5">
        <dbReference type="Rhea" id="RHEA:63165"/>
    </physiologicalReaction>
</comment>
<comment type="catalytic activity">
    <reaction evidence="3">
        <text>(9Z,12Z,15Z)-octadecatrienamide + H2O = (9Z,12Z,15Z)-octadecatrienoate + NH4(+)</text>
        <dbReference type="Rhea" id="RHEA:62976"/>
        <dbReference type="ChEBI" id="CHEBI:15377"/>
        <dbReference type="ChEBI" id="CHEBI:28938"/>
        <dbReference type="ChEBI" id="CHEBI:32387"/>
        <dbReference type="ChEBI" id="CHEBI:142684"/>
    </reaction>
    <physiologicalReaction direction="left-to-right" evidence="3">
        <dbReference type="Rhea" id="RHEA:62977"/>
    </physiologicalReaction>
</comment>
<comment type="catalytic activity">
    <reaction evidence="3">
        <text>(5Z,8Z,11Z,14Z)-eicosatetraenamide + H2O = (5Z,8Z,11Z,14Z)-eicosatetraenoate + NH4(+)</text>
        <dbReference type="Rhea" id="RHEA:63016"/>
        <dbReference type="ChEBI" id="CHEBI:15377"/>
        <dbReference type="ChEBI" id="CHEBI:28938"/>
        <dbReference type="ChEBI" id="CHEBI:32395"/>
        <dbReference type="ChEBI" id="CHEBI:137830"/>
    </reaction>
    <physiologicalReaction direction="left-to-right" evidence="3">
        <dbReference type="Rhea" id="RHEA:63017"/>
    </physiologicalReaction>
</comment>
<comment type="catalytic activity">
    <reaction evidence="3">
        <text>(6Z)-octadecenamide + H2O = (6Z)-octadecenoate + NH4(+)</text>
        <dbReference type="Rhea" id="RHEA:63008"/>
        <dbReference type="ChEBI" id="CHEBI:15377"/>
        <dbReference type="ChEBI" id="CHEBI:28938"/>
        <dbReference type="ChEBI" id="CHEBI:32375"/>
        <dbReference type="ChEBI" id="CHEBI:146168"/>
    </reaction>
    <physiologicalReaction direction="left-to-right" evidence="3">
        <dbReference type="Rhea" id="RHEA:63009"/>
    </physiologicalReaction>
</comment>
<comment type="catalytic activity">
    <reaction evidence="3">
        <text>(15Z)-tetracosenamide + H2O = (15Z)-tetracosenoate + NH4(+)</text>
        <dbReference type="Rhea" id="RHEA:63028"/>
        <dbReference type="ChEBI" id="CHEBI:15377"/>
        <dbReference type="ChEBI" id="CHEBI:28938"/>
        <dbReference type="ChEBI" id="CHEBI:32392"/>
        <dbReference type="ChEBI" id="CHEBI:146166"/>
    </reaction>
    <physiologicalReaction direction="left-to-right" evidence="3">
        <dbReference type="Rhea" id="RHEA:63029"/>
    </physiologicalReaction>
</comment>
<comment type="catalytic activity">
    <reaction evidence="3">
        <text>(8Z,11Z,14Z)-eicosatrienamide + H2O = (8Z,11Z,14Z)-eicosatrienoate + NH4(+)</text>
        <dbReference type="Rhea" id="RHEA:62996"/>
        <dbReference type="ChEBI" id="CHEBI:15377"/>
        <dbReference type="ChEBI" id="CHEBI:28938"/>
        <dbReference type="ChEBI" id="CHEBI:71589"/>
        <dbReference type="ChEBI" id="CHEBI:146163"/>
    </reaction>
    <physiologicalReaction direction="left-to-right" evidence="3">
        <dbReference type="Rhea" id="RHEA:62997"/>
    </physiologicalReaction>
</comment>
<comment type="catalytic activity">
    <reaction evidence="3">
        <text>(11Z,14Z,17Z)-eicosatrienamide + H2O = (11Z,14Z,17Z)-eicosatrienoate + NH4(+)</text>
        <dbReference type="Rhea" id="RHEA:63000"/>
        <dbReference type="ChEBI" id="CHEBI:15377"/>
        <dbReference type="ChEBI" id="CHEBI:28938"/>
        <dbReference type="ChEBI" id="CHEBI:77223"/>
        <dbReference type="ChEBI" id="CHEBI:146164"/>
    </reaction>
    <physiologicalReaction direction="left-to-right" evidence="3">
        <dbReference type="Rhea" id="RHEA:63001"/>
    </physiologicalReaction>
</comment>
<comment type="catalytic activity">
    <reaction evidence="3">
        <text>(11Z,14Z)-eicosadienamide + H2O = (11Z,14Z)-eicosadienoate + NH4(+)</text>
        <dbReference type="Rhea" id="RHEA:63004"/>
        <dbReference type="ChEBI" id="CHEBI:15377"/>
        <dbReference type="ChEBI" id="CHEBI:28938"/>
        <dbReference type="ChEBI" id="CHEBI:77220"/>
        <dbReference type="ChEBI" id="CHEBI:146165"/>
    </reaction>
    <physiologicalReaction direction="left-to-right" evidence="3">
        <dbReference type="Rhea" id="RHEA:63005"/>
    </physiologicalReaction>
</comment>
<comment type="catalytic activity">
    <reaction evidence="3">
        <text>(9Z,12Z)-octadecadienamide + H2O = (9Z,12Z)-octadecadienoate + NH4(+)</text>
        <dbReference type="Rhea" id="RHEA:63020"/>
        <dbReference type="ChEBI" id="CHEBI:15377"/>
        <dbReference type="ChEBI" id="CHEBI:28938"/>
        <dbReference type="ChEBI" id="CHEBI:30245"/>
        <dbReference type="ChEBI" id="CHEBI:82984"/>
    </reaction>
    <physiologicalReaction direction="left-to-right" evidence="3">
        <dbReference type="Rhea" id="RHEA:63021"/>
    </physiologicalReaction>
</comment>
<comment type="catalytic activity">
    <reaction evidence="3">
        <text>tetradecamide + H2O = tetradecanoate + NH4(+)</text>
        <dbReference type="Rhea" id="RHEA:62992"/>
        <dbReference type="ChEBI" id="CHEBI:15377"/>
        <dbReference type="ChEBI" id="CHEBI:28938"/>
        <dbReference type="ChEBI" id="CHEBI:30807"/>
        <dbReference type="ChEBI" id="CHEBI:137125"/>
    </reaction>
    <physiologicalReaction direction="left-to-right" evidence="3">
        <dbReference type="Rhea" id="RHEA:62993"/>
    </physiologicalReaction>
</comment>
<comment type="catalytic activity">
    <reaction evidence="3">
        <text>1-O-methyl-(5Z,8Z,11Z,14Z)-eicosatetraenoate + H2O = methanol + (5Z,8Z,11Z,14Z)-eicosatetraenoate + H(+)</text>
        <dbReference type="Rhea" id="RHEA:63052"/>
        <dbReference type="ChEBI" id="CHEBI:15377"/>
        <dbReference type="ChEBI" id="CHEBI:15378"/>
        <dbReference type="ChEBI" id="CHEBI:17790"/>
        <dbReference type="ChEBI" id="CHEBI:32395"/>
        <dbReference type="ChEBI" id="CHEBI:78033"/>
    </reaction>
    <physiologicalReaction direction="left-to-right" evidence="3">
        <dbReference type="Rhea" id="RHEA:63053"/>
    </physiologicalReaction>
</comment>
<comment type="catalytic activity">
    <reaction evidence="3">
        <text>(11Z)-eicosenamide + H2O = (11Z)-eicosenoate + NH4(+)</text>
        <dbReference type="Rhea" id="RHEA:63120"/>
        <dbReference type="ChEBI" id="CHEBI:15377"/>
        <dbReference type="ChEBI" id="CHEBI:28938"/>
        <dbReference type="ChEBI" id="CHEBI:32426"/>
        <dbReference type="ChEBI" id="CHEBI:146167"/>
    </reaction>
    <physiologicalReaction direction="left-to-right" evidence="3">
        <dbReference type="Rhea" id="RHEA:63121"/>
    </physiologicalReaction>
</comment>
<comment type="catalytic activity">
    <reaction evidence="6">
        <text>(9Z)-octadecenoate + glycine = N-(9Z-octadecenoyl)glycine + H2O</text>
        <dbReference type="Rhea" id="RHEA:51316"/>
        <dbReference type="ChEBI" id="CHEBI:15377"/>
        <dbReference type="ChEBI" id="CHEBI:30823"/>
        <dbReference type="ChEBI" id="CHEBI:57305"/>
        <dbReference type="ChEBI" id="CHEBI:133992"/>
    </reaction>
    <physiologicalReaction direction="right-to-left" evidence="6">
        <dbReference type="Rhea" id="RHEA:51318"/>
    </physiologicalReaction>
</comment>
<comment type="catalytic activity">
    <reaction evidence="6">
        <text>N-(5Z,8Z,11Z,14Z)-eicosatetraenoyl-glycine + H2O = (5Z,8Z,11Z,14Z)-eicosatetraenoate + glycine</text>
        <dbReference type="Rhea" id="RHEA:64108"/>
        <dbReference type="ChEBI" id="CHEBI:15377"/>
        <dbReference type="ChEBI" id="CHEBI:32395"/>
        <dbReference type="ChEBI" id="CHEBI:57305"/>
        <dbReference type="ChEBI" id="CHEBI:59002"/>
    </reaction>
    <physiologicalReaction direction="left-to-right" evidence="6">
        <dbReference type="Rhea" id="RHEA:64109"/>
    </physiologicalReaction>
</comment>
<comment type="catalytic activity">
    <reaction evidence="6">
        <text>N-(5Z,8Z,11Z,14Z-eicosatetraenoyl)-L-serine + H2O = (5Z,8Z,11Z,14Z)-eicosatetraenoate + L-serine</text>
        <dbReference type="Rhea" id="RHEA:64116"/>
        <dbReference type="ChEBI" id="CHEBI:15377"/>
        <dbReference type="ChEBI" id="CHEBI:32395"/>
        <dbReference type="ChEBI" id="CHEBI:33384"/>
        <dbReference type="ChEBI" id="CHEBI:149697"/>
    </reaction>
    <physiologicalReaction direction="left-to-right" evidence="6">
        <dbReference type="Rhea" id="RHEA:64117"/>
    </physiologicalReaction>
</comment>
<comment type="activity regulation">
    <text evidence="6">Inhibited the trifluoromethyl compound PF-3845.</text>
</comment>
<comment type="subunit">
    <text evidence="3">Homodimer.</text>
</comment>
<comment type="subcellular location">
    <subcellularLocation>
        <location evidence="9">Endoplasmic reticulum membrane</location>
        <topology evidence="3">Single-pass membrane protein</topology>
    </subcellularLocation>
    <subcellularLocation>
        <location evidence="3">Golgi apparatus membrane</location>
        <topology evidence="3">Single-pass membrane protein</topology>
    </subcellularLocation>
    <text evidence="3">Seems to be associated with the endoplasmic reticulum and/or Golgi apparatus.</text>
</comment>
<comment type="disruption phenotype">
    <text evidence="6">Genetic ablation of FAAH bidirectionally dysregulates a subset of intracellular, but not circulating, N-fatty acyl amino acids.</text>
</comment>
<comment type="similarity">
    <text evidence="7">Belongs to the amidase family.</text>
</comment>
<keyword id="KW-0256">Endoplasmic reticulum</keyword>
<keyword id="KW-0333">Golgi apparatus</keyword>
<keyword id="KW-0378">Hydrolase</keyword>
<keyword id="KW-0442">Lipid degradation</keyword>
<keyword id="KW-0443">Lipid metabolism</keyword>
<keyword id="KW-0472">Membrane</keyword>
<keyword id="KW-0597">Phosphoprotein</keyword>
<keyword id="KW-1185">Reference proteome</keyword>
<keyword id="KW-0812">Transmembrane</keyword>
<keyword id="KW-1133">Transmembrane helix</keyword>
<feature type="chain" id="PRO_0000105265" description="Fatty-acid amide hydrolase 1">
    <location>
        <begin position="1"/>
        <end position="579"/>
    </location>
</feature>
<feature type="transmembrane region" description="Helical" evidence="4">
    <location>
        <begin position="9"/>
        <end position="29"/>
    </location>
</feature>
<feature type="topological domain" description="Cytoplasmic" evidence="1">
    <location>
        <begin position="30"/>
        <end position="403"/>
    </location>
</feature>
<feature type="intramembrane region" evidence="1">
    <location>
        <begin position="404"/>
        <end position="433"/>
    </location>
</feature>
<feature type="topological domain" description="Cytoplasmic" evidence="1">
    <location>
        <begin position="434"/>
        <end position="579"/>
    </location>
</feature>
<feature type="active site" description="Charge relay system" evidence="1">
    <location>
        <position position="142"/>
    </location>
</feature>
<feature type="active site" description="Charge relay system" evidence="1">
    <location>
        <position position="217"/>
    </location>
</feature>
<feature type="active site" description="Acyl-ester intermediate" evidence="1">
    <location>
        <position position="241"/>
    </location>
</feature>
<feature type="binding site" evidence="1">
    <location>
        <position position="191"/>
    </location>
    <ligand>
        <name>substrate</name>
    </ligand>
</feature>
<feature type="binding site" evidence="1">
    <location>
        <position position="217"/>
    </location>
    <ligand>
        <name>substrate</name>
    </ligand>
</feature>
<feature type="binding site" evidence="1">
    <location>
        <begin position="238"/>
        <end position="241"/>
    </location>
    <ligand>
        <name>substrate</name>
    </ligand>
</feature>
<feature type="modified residue" description="Phosphoserine" evidence="2">
    <location>
        <position position="241"/>
    </location>
</feature>
<feature type="sequence conflict" description="In Ref. 4; AAH06863." evidence="7" ref="4">
    <original>E</original>
    <variation>Q</variation>
    <location>
        <position position="72"/>
    </location>
</feature>
<feature type="sequence conflict" description="In Ref. 3; AK004985." evidence="7" ref="3">
    <original>S</original>
    <variation>P</variation>
    <location>
        <position position="230"/>
    </location>
</feature>
<name>FAAH1_MOUSE</name>
<dbReference type="EC" id="3.5.1.99" evidence="5 6"/>
<dbReference type="EC" id="3.1.1.-" evidence="3"/>
<dbReference type="EMBL" id="U82536">
    <property type="protein sequence ID" value="AAB58506.1"/>
    <property type="molecule type" value="mRNA"/>
</dbReference>
<dbReference type="EMBL" id="AF098009">
    <property type="protein sequence ID" value="AAD11788.1"/>
    <property type="molecule type" value="Genomic_DNA"/>
</dbReference>
<dbReference type="EMBL" id="AF097997">
    <property type="protein sequence ID" value="AAD11788.1"/>
    <property type="status" value="JOINED"/>
    <property type="molecule type" value="Genomic_DNA"/>
</dbReference>
<dbReference type="EMBL" id="AF097998">
    <property type="protein sequence ID" value="AAD11788.1"/>
    <property type="status" value="JOINED"/>
    <property type="molecule type" value="Genomic_DNA"/>
</dbReference>
<dbReference type="EMBL" id="AF097999">
    <property type="protein sequence ID" value="AAD11788.1"/>
    <property type="status" value="JOINED"/>
    <property type="molecule type" value="Genomic_DNA"/>
</dbReference>
<dbReference type="EMBL" id="AF098000">
    <property type="protein sequence ID" value="AAD11788.1"/>
    <property type="status" value="JOINED"/>
    <property type="molecule type" value="Genomic_DNA"/>
</dbReference>
<dbReference type="EMBL" id="AF098001">
    <property type="protein sequence ID" value="AAD11788.1"/>
    <property type="status" value="JOINED"/>
    <property type="molecule type" value="Genomic_DNA"/>
</dbReference>
<dbReference type="EMBL" id="AF098002">
    <property type="protein sequence ID" value="AAD11788.1"/>
    <property type="status" value="JOINED"/>
    <property type="molecule type" value="Genomic_DNA"/>
</dbReference>
<dbReference type="EMBL" id="AF098003">
    <property type="protein sequence ID" value="AAD11788.1"/>
    <property type="status" value="JOINED"/>
    <property type="molecule type" value="Genomic_DNA"/>
</dbReference>
<dbReference type="EMBL" id="AF098004">
    <property type="protein sequence ID" value="AAD11788.1"/>
    <property type="status" value="JOINED"/>
    <property type="molecule type" value="Genomic_DNA"/>
</dbReference>
<dbReference type="EMBL" id="AF098005">
    <property type="protein sequence ID" value="AAD11788.1"/>
    <property type="status" value="JOINED"/>
    <property type="molecule type" value="Genomic_DNA"/>
</dbReference>
<dbReference type="EMBL" id="AF098006">
    <property type="protein sequence ID" value="AAD11788.1"/>
    <property type="status" value="JOINED"/>
    <property type="molecule type" value="Genomic_DNA"/>
</dbReference>
<dbReference type="EMBL" id="AF098007">
    <property type="protein sequence ID" value="AAD11788.1"/>
    <property type="status" value="JOINED"/>
    <property type="molecule type" value="Genomic_DNA"/>
</dbReference>
<dbReference type="EMBL" id="AF098008">
    <property type="protein sequence ID" value="AAD11788.1"/>
    <property type="status" value="JOINED"/>
    <property type="molecule type" value="Genomic_DNA"/>
</dbReference>
<dbReference type="EMBL" id="AK004985">
    <property type="status" value="NOT_ANNOTATED_CDS"/>
    <property type="molecule type" value="mRNA"/>
</dbReference>
<dbReference type="EMBL" id="BC006863">
    <property type="protein sequence ID" value="AAH06863.1"/>
    <property type="molecule type" value="mRNA"/>
</dbReference>
<dbReference type="EMBL" id="BC052321">
    <property type="protein sequence ID" value="AAH52321.1"/>
    <property type="molecule type" value="mRNA"/>
</dbReference>
<dbReference type="CCDS" id="CCDS18501.1"/>
<dbReference type="RefSeq" id="NP_034303.3">
    <property type="nucleotide sequence ID" value="NM_010173.4"/>
</dbReference>
<dbReference type="SMR" id="O08914"/>
<dbReference type="FunCoup" id="O08914">
    <property type="interactions" value="35"/>
</dbReference>
<dbReference type="IntAct" id="O08914">
    <property type="interactions" value="1"/>
</dbReference>
<dbReference type="MINT" id="O08914"/>
<dbReference type="STRING" id="10090.ENSMUSP00000041543"/>
<dbReference type="BindingDB" id="O08914"/>
<dbReference type="ChEMBL" id="CHEMBL3455"/>
<dbReference type="DrugCentral" id="O08914"/>
<dbReference type="GuidetoPHARMACOLOGY" id="1400"/>
<dbReference type="SwissLipids" id="SLP:000001980"/>
<dbReference type="GlyGen" id="O08914">
    <property type="glycosylation" value="3 sites, 1 N-linked glycan (1 site)"/>
</dbReference>
<dbReference type="iPTMnet" id="O08914"/>
<dbReference type="PhosphoSitePlus" id="O08914"/>
<dbReference type="SwissPalm" id="O08914"/>
<dbReference type="jPOST" id="O08914"/>
<dbReference type="PaxDb" id="10090-ENSMUSP00000041543"/>
<dbReference type="PeptideAtlas" id="O08914"/>
<dbReference type="ProteomicsDB" id="267703"/>
<dbReference type="Pumba" id="O08914"/>
<dbReference type="Antibodypedia" id="1478">
    <property type="antibodies" value="403 antibodies from 37 providers"/>
</dbReference>
<dbReference type="DNASU" id="14073"/>
<dbReference type="Ensembl" id="ENSMUST00000049095.6">
    <property type="protein sequence ID" value="ENSMUSP00000041543.5"/>
    <property type="gene ID" value="ENSMUSG00000034171.14"/>
</dbReference>
<dbReference type="GeneID" id="14073"/>
<dbReference type="KEGG" id="mmu:14073"/>
<dbReference type="UCSC" id="uc008ufs.2">
    <property type="organism name" value="mouse"/>
</dbReference>
<dbReference type="AGR" id="MGI:109609"/>
<dbReference type="CTD" id="2166"/>
<dbReference type="MGI" id="MGI:109609">
    <property type="gene designation" value="Faah"/>
</dbReference>
<dbReference type="VEuPathDB" id="HostDB:ENSMUSG00000034171"/>
<dbReference type="eggNOG" id="KOG1212">
    <property type="taxonomic scope" value="Eukaryota"/>
</dbReference>
<dbReference type="GeneTree" id="ENSGT00940000161237"/>
<dbReference type="HOGENOM" id="CLU_009600_9_3_1"/>
<dbReference type="InParanoid" id="O08914"/>
<dbReference type="OMA" id="GMQPWKY"/>
<dbReference type="OrthoDB" id="6428749at2759"/>
<dbReference type="PhylomeDB" id="O08914"/>
<dbReference type="TreeFam" id="TF314455"/>
<dbReference type="BRENDA" id="3.5.1.4">
    <property type="organism ID" value="3474"/>
</dbReference>
<dbReference type="BRENDA" id="3.5.1.99">
    <property type="organism ID" value="3474"/>
</dbReference>
<dbReference type="Reactome" id="R-MMU-2142753">
    <property type="pathway name" value="Arachidonate metabolism"/>
</dbReference>
<dbReference type="BioGRID-ORCS" id="14073">
    <property type="hits" value="4 hits in 79 CRISPR screens"/>
</dbReference>
<dbReference type="CD-CODE" id="CE726F99">
    <property type="entry name" value="Postsynaptic density"/>
</dbReference>
<dbReference type="ChiTaRS" id="Faah">
    <property type="organism name" value="mouse"/>
</dbReference>
<dbReference type="PRO" id="PR:O08914"/>
<dbReference type="Proteomes" id="UP000000589">
    <property type="component" value="Chromosome 4"/>
</dbReference>
<dbReference type="RNAct" id="O08914">
    <property type="molecule type" value="protein"/>
</dbReference>
<dbReference type="Bgee" id="ENSMUSG00000034171">
    <property type="expression patterns" value="Expressed in dentate gyrus of hippocampal formation granule cell and 212 other cell types or tissues"/>
</dbReference>
<dbReference type="GO" id="GO:0005789">
    <property type="term" value="C:endoplasmic reticulum membrane"/>
    <property type="evidence" value="ECO:0007669"/>
    <property type="project" value="UniProtKB-SubCell"/>
</dbReference>
<dbReference type="GO" id="GO:0098978">
    <property type="term" value="C:glutamatergic synapse"/>
    <property type="evidence" value="ECO:0000314"/>
    <property type="project" value="SynGO"/>
</dbReference>
<dbReference type="GO" id="GO:0000139">
    <property type="term" value="C:Golgi membrane"/>
    <property type="evidence" value="ECO:0007669"/>
    <property type="project" value="UniProtKB-SubCell"/>
</dbReference>
<dbReference type="GO" id="GO:0031090">
    <property type="term" value="C:organelle membrane"/>
    <property type="evidence" value="ECO:0000250"/>
    <property type="project" value="UniProtKB"/>
</dbReference>
<dbReference type="GO" id="GO:0098794">
    <property type="term" value="C:postsynapse"/>
    <property type="evidence" value="ECO:0007669"/>
    <property type="project" value="Ensembl"/>
</dbReference>
<dbReference type="GO" id="GO:0098793">
    <property type="term" value="C:presynapse"/>
    <property type="evidence" value="ECO:0007669"/>
    <property type="project" value="Ensembl"/>
</dbReference>
<dbReference type="GO" id="GO:0004040">
    <property type="term" value="F:amidase activity"/>
    <property type="evidence" value="ECO:0007669"/>
    <property type="project" value="Ensembl"/>
</dbReference>
<dbReference type="GO" id="GO:0017064">
    <property type="term" value="F:fatty acid amide hydrolase activity"/>
    <property type="evidence" value="ECO:0000250"/>
    <property type="project" value="UniProtKB"/>
</dbReference>
<dbReference type="GO" id="GO:0042802">
    <property type="term" value="F:identical protein binding"/>
    <property type="evidence" value="ECO:0007669"/>
    <property type="project" value="Ensembl"/>
</dbReference>
<dbReference type="GO" id="GO:0047372">
    <property type="term" value="F:monoacylglycerol lipase activity"/>
    <property type="evidence" value="ECO:0000315"/>
    <property type="project" value="MGI"/>
</dbReference>
<dbReference type="GO" id="GO:0005543">
    <property type="term" value="F:phospholipid binding"/>
    <property type="evidence" value="ECO:0007669"/>
    <property type="project" value="Ensembl"/>
</dbReference>
<dbReference type="GO" id="GO:0009062">
    <property type="term" value="P:fatty acid catabolic process"/>
    <property type="evidence" value="ECO:0000250"/>
    <property type="project" value="UniProtKB"/>
</dbReference>
<dbReference type="GO" id="GO:0052651">
    <property type="term" value="P:monoacylglycerol catabolic process"/>
    <property type="evidence" value="ECO:0000250"/>
    <property type="project" value="UniProtKB"/>
</dbReference>
<dbReference type="GO" id="GO:0045907">
    <property type="term" value="P:positive regulation of vasoconstriction"/>
    <property type="evidence" value="ECO:0007669"/>
    <property type="project" value="Ensembl"/>
</dbReference>
<dbReference type="GO" id="GO:0150036">
    <property type="term" value="P:regulation of trans-synaptic signaling by endocannabinoid, modulating synaptic transmission"/>
    <property type="evidence" value="ECO:0000314"/>
    <property type="project" value="SynGO"/>
</dbReference>
<dbReference type="FunFam" id="3.90.1300.10:FF:000001">
    <property type="entry name" value="Fatty-acid amide hydrolase 1"/>
    <property type="match status" value="1"/>
</dbReference>
<dbReference type="Gene3D" id="3.90.1300.10">
    <property type="entry name" value="Amidase signature (AS) domain"/>
    <property type="match status" value="1"/>
</dbReference>
<dbReference type="InterPro" id="IPR020556">
    <property type="entry name" value="Amidase_CS"/>
</dbReference>
<dbReference type="InterPro" id="IPR023631">
    <property type="entry name" value="Amidase_dom"/>
</dbReference>
<dbReference type="InterPro" id="IPR036928">
    <property type="entry name" value="AS_sf"/>
</dbReference>
<dbReference type="InterPro" id="IPR052096">
    <property type="entry name" value="Endocannabinoid_amidase"/>
</dbReference>
<dbReference type="PANTHER" id="PTHR45847">
    <property type="entry name" value="FATTY ACID AMIDE HYDROLASE"/>
    <property type="match status" value="1"/>
</dbReference>
<dbReference type="PANTHER" id="PTHR45847:SF3">
    <property type="entry name" value="FATTY-ACID AMIDE HYDROLASE 1"/>
    <property type="match status" value="1"/>
</dbReference>
<dbReference type="Pfam" id="PF01425">
    <property type="entry name" value="Amidase"/>
    <property type="match status" value="1"/>
</dbReference>
<dbReference type="PIRSF" id="PIRSF001221">
    <property type="entry name" value="Amidase_fungi"/>
    <property type="match status" value="1"/>
</dbReference>
<dbReference type="SUPFAM" id="SSF75304">
    <property type="entry name" value="Amidase signature (AS) enzymes"/>
    <property type="match status" value="1"/>
</dbReference>
<dbReference type="PROSITE" id="PS00571">
    <property type="entry name" value="AMIDASES"/>
    <property type="match status" value="1"/>
</dbReference>
<accession>O08914</accession>
<accession>Q922S0</accession>
<accession>Q9DBF5</accession>
<reference key="1">
    <citation type="journal article" date="1997" name="Proc. Natl. Acad. Sci. U.S.A.">
        <title>Molecular characterization of human and mouse fatty acid amide hydrolases.</title>
        <authorList>
            <person name="Giang D.K."/>
            <person name="Cravatt B.F."/>
        </authorList>
    </citation>
    <scope>NUCLEOTIDE SEQUENCE [MRNA]</scope>
    <source>
        <tissue>Liver</tissue>
    </source>
</reference>
<reference key="2">
    <citation type="journal article" date="1998" name="Genomics">
        <title>Conserved chromosomal location and genomic structure of human and mouse fatty-acid amide hydrolase genes and evaluation of clasper as a candidate neurological mutation.</title>
        <authorList>
            <person name="Wan M."/>
            <person name="Cravatt B.F."/>
            <person name="Ring H.Z."/>
            <person name="Zhang X."/>
            <person name="Francke U."/>
        </authorList>
    </citation>
    <scope>NUCLEOTIDE SEQUENCE [GENOMIC DNA]</scope>
</reference>
<reference key="3">
    <citation type="journal article" date="2005" name="Science">
        <title>The transcriptional landscape of the mammalian genome.</title>
        <authorList>
            <person name="Carninci P."/>
            <person name="Kasukawa T."/>
            <person name="Katayama S."/>
            <person name="Gough J."/>
            <person name="Frith M.C."/>
            <person name="Maeda N."/>
            <person name="Oyama R."/>
            <person name="Ravasi T."/>
            <person name="Lenhard B."/>
            <person name="Wells C."/>
            <person name="Kodzius R."/>
            <person name="Shimokawa K."/>
            <person name="Bajic V.B."/>
            <person name="Brenner S.E."/>
            <person name="Batalov S."/>
            <person name="Forrest A.R."/>
            <person name="Zavolan M."/>
            <person name="Davis M.J."/>
            <person name="Wilming L.G."/>
            <person name="Aidinis V."/>
            <person name="Allen J.E."/>
            <person name="Ambesi-Impiombato A."/>
            <person name="Apweiler R."/>
            <person name="Aturaliya R.N."/>
            <person name="Bailey T.L."/>
            <person name="Bansal M."/>
            <person name="Baxter L."/>
            <person name="Beisel K.W."/>
            <person name="Bersano T."/>
            <person name="Bono H."/>
            <person name="Chalk A.M."/>
            <person name="Chiu K.P."/>
            <person name="Choudhary V."/>
            <person name="Christoffels A."/>
            <person name="Clutterbuck D.R."/>
            <person name="Crowe M.L."/>
            <person name="Dalla E."/>
            <person name="Dalrymple B.P."/>
            <person name="de Bono B."/>
            <person name="Della Gatta G."/>
            <person name="di Bernardo D."/>
            <person name="Down T."/>
            <person name="Engstrom P."/>
            <person name="Fagiolini M."/>
            <person name="Faulkner G."/>
            <person name="Fletcher C.F."/>
            <person name="Fukushima T."/>
            <person name="Furuno M."/>
            <person name="Futaki S."/>
            <person name="Gariboldi M."/>
            <person name="Georgii-Hemming P."/>
            <person name="Gingeras T.R."/>
            <person name="Gojobori T."/>
            <person name="Green R.E."/>
            <person name="Gustincich S."/>
            <person name="Harbers M."/>
            <person name="Hayashi Y."/>
            <person name="Hensch T.K."/>
            <person name="Hirokawa N."/>
            <person name="Hill D."/>
            <person name="Huminiecki L."/>
            <person name="Iacono M."/>
            <person name="Ikeo K."/>
            <person name="Iwama A."/>
            <person name="Ishikawa T."/>
            <person name="Jakt M."/>
            <person name="Kanapin A."/>
            <person name="Katoh M."/>
            <person name="Kawasawa Y."/>
            <person name="Kelso J."/>
            <person name="Kitamura H."/>
            <person name="Kitano H."/>
            <person name="Kollias G."/>
            <person name="Krishnan S.P."/>
            <person name="Kruger A."/>
            <person name="Kummerfeld S.K."/>
            <person name="Kurochkin I.V."/>
            <person name="Lareau L.F."/>
            <person name="Lazarevic D."/>
            <person name="Lipovich L."/>
            <person name="Liu J."/>
            <person name="Liuni S."/>
            <person name="McWilliam S."/>
            <person name="Madan Babu M."/>
            <person name="Madera M."/>
            <person name="Marchionni L."/>
            <person name="Matsuda H."/>
            <person name="Matsuzawa S."/>
            <person name="Miki H."/>
            <person name="Mignone F."/>
            <person name="Miyake S."/>
            <person name="Morris K."/>
            <person name="Mottagui-Tabar S."/>
            <person name="Mulder N."/>
            <person name="Nakano N."/>
            <person name="Nakauchi H."/>
            <person name="Ng P."/>
            <person name="Nilsson R."/>
            <person name="Nishiguchi S."/>
            <person name="Nishikawa S."/>
            <person name="Nori F."/>
            <person name="Ohara O."/>
            <person name="Okazaki Y."/>
            <person name="Orlando V."/>
            <person name="Pang K.C."/>
            <person name="Pavan W.J."/>
            <person name="Pavesi G."/>
            <person name="Pesole G."/>
            <person name="Petrovsky N."/>
            <person name="Piazza S."/>
            <person name="Reed J."/>
            <person name="Reid J.F."/>
            <person name="Ring B.Z."/>
            <person name="Ringwald M."/>
            <person name="Rost B."/>
            <person name="Ruan Y."/>
            <person name="Salzberg S.L."/>
            <person name="Sandelin A."/>
            <person name="Schneider C."/>
            <person name="Schoenbach C."/>
            <person name="Sekiguchi K."/>
            <person name="Semple C.A."/>
            <person name="Seno S."/>
            <person name="Sessa L."/>
            <person name="Sheng Y."/>
            <person name="Shibata Y."/>
            <person name="Shimada H."/>
            <person name="Shimada K."/>
            <person name="Silva D."/>
            <person name="Sinclair B."/>
            <person name="Sperling S."/>
            <person name="Stupka E."/>
            <person name="Sugiura K."/>
            <person name="Sultana R."/>
            <person name="Takenaka Y."/>
            <person name="Taki K."/>
            <person name="Tammoja K."/>
            <person name="Tan S.L."/>
            <person name="Tang S."/>
            <person name="Taylor M.S."/>
            <person name="Tegner J."/>
            <person name="Teichmann S.A."/>
            <person name="Ueda H.R."/>
            <person name="van Nimwegen E."/>
            <person name="Verardo R."/>
            <person name="Wei C.L."/>
            <person name="Yagi K."/>
            <person name="Yamanishi H."/>
            <person name="Zabarovsky E."/>
            <person name="Zhu S."/>
            <person name="Zimmer A."/>
            <person name="Hide W."/>
            <person name="Bult C."/>
            <person name="Grimmond S.M."/>
            <person name="Teasdale R.D."/>
            <person name="Liu E.T."/>
            <person name="Brusic V."/>
            <person name="Quackenbush J."/>
            <person name="Wahlestedt C."/>
            <person name="Mattick J.S."/>
            <person name="Hume D.A."/>
            <person name="Kai C."/>
            <person name="Sasaki D."/>
            <person name="Tomaru Y."/>
            <person name="Fukuda S."/>
            <person name="Kanamori-Katayama M."/>
            <person name="Suzuki M."/>
            <person name="Aoki J."/>
            <person name="Arakawa T."/>
            <person name="Iida J."/>
            <person name="Imamura K."/>
            <person name="Itoh M."/>
            <person name="Kato T."/>
            <person name="Kawaji H."/>
            <person name="Kawagashira N."/>
            <person name="Kawashima T."/>
            <person name="Kojima M."/>
            <person name="Kondo S."/>
            <person name="Konno H."/>
            <person name="Nakano K."/>
            <person name="Ninomiya N."/>
            <person name="Nishio T."/>
            <person name="Okada M."/>
            <person name="Plessy C."/>
            <person name="Shibata K."/>
            <person name="Shiraki T."/>
            <person name="Suzuki S."/>
            <person name="Tagami M."/>
            <person name="Waki K."/>
            <person name="Watahiki A."/>
            <person name="Okamura-Oho Y."/>
            <person name="Suzuki H."/>
            <person name="Kawai J."/>
            <person name="Hayashizaki Y."/>
        </authorList>
    </citation>
    <scope>NUCLEOTIDE SEQUENCE [LARGE SCALE MRNA]</scope>
    <source>
        <strain>C57BL/6J</strain>
        <tissue>Liver</tissue>
    </source>
</reference>
<reference key="4">
    <citation type="journal article" date="2004" name="Genome Res.">
        <title>The status, quality, and expansion of the NIH full-length cDNA project: the Mammalian Gene Collection (MGC).</title>
        <authorList>
            <consortium name="The MGC Project Team"/>
        </authorList>
    </citation>
    <scope>NUCLEOTIDE SEQUENCE [LARGE SCALE MRNA]</scope>
    <source>
        <strain>FVB/N-3</strain>
        <tissue>Mammary gland</tissue>
    </source>
</reference>
<reference key="5">
    <citation type="journal article" date="2004" name="Biochemistry">
        <title>Assignment of endogenous substrates to enzymes by global metabolite profiling.</title>
        <authorList>
            <person name="Saghatelian A."/>
            <person name="Trauger S.A."/>
            <person name="Want E.J."/>
            <person name="Hawkins E.G."/>
            <person name="Siuzdak G."/>
            <person name="Cravatt B.F."/>
        </authorList>
    </citation>
    <scope>FUNCTION</scope>
    <scope>CATALYTIC ACTIVITY</scope>
</reference>
<reference key="6">
    <citation type="journal article" date="2020" name="Elife">
        <title>Cooperative enzymatic control of N-acyl amino acids by PM20D1 and FAAH.</title>
        <authorList>
            <person name="Kim J.T."/>
            <person name="Terrell S.M."/>
            <person name="Li V.L."/>
            <person name="Wei W."/>
            <person name="Fischer C.R."/>
            <person name="Long J.Z."/>
        </authorList>
    </citation>
    <scope>FUNCTION</scope>
    <scope>CATALYTIC ACTIVITY</scope>
    <scope>ACTIVITY REGULATION</scope>
    <scope>SUBCELLULAR LOCATION</scope>
    <scope>DISRUPTION PHENOTYPE</scope>
</reference>
<reference key="7">
    <citation type="journal article" date="2010" name="Cell">
        <title>A tissue-specific atlas of mouse protein phosphorylation and expression.</title>
        <authorList>
            <person name="Huttlin E.L."/>
            <person name="Jedrychowski M.P."/>
            <person name="Elias J.E."/>
            <person name="Goswami T."/>
            <person name="Rad R."/>
            <person name="Beausoleil S.A."/>
            <person name="Villen J."/>
            <person name="Haas W."/>
            <person name="Sowa M.E."/>
            <person name="Gygi S.P."/>
        </authorList>
    </citation>
    <scope>IDENTIFICATION BY MASS SPECTROMETRY [LARGE SCALE ANALYSIS]</scope>
    <source>
        <tissue>Brain</tissue>
        <tissue>Kidney</tissue>
        <tissue>Liver</tissue>
        <tissue>Lung</tissue>
        <tissue>Pancreas</tissue>
        <tissue>Spleen</tissue>
        <tissue>Testis</tissue>
    </source>
</reference>
<proteinExistence type="evidence at protein level"/>
<sequence>MVLSEVWTALSGLSGVCLACSLLSAAVVLRWTRSQTARGAVTRARQKQRAGLETMDKAVQRFRLQNPDLDSEALLALPLLQLVQKLQSGELSPEAVLFTYLGKAWEVNKGTNCVTSYLTDCETQLSQAPRQGLLYGVPVSLKECFSYKGHASTLGLSLNEGVTSESDCVVVQVLKLQGAVPFVHTNVPQSMLSYDCSNPLFGQTMNPWKPSKSPGGSSGGEGALIGSGGSPLGLGTDIGGSIRFPSAFCGICGLKPTGNRLSKSGLKSCVYGQTAVQLSVGPMARDVDSLALCMKALLCEDLFRLDSTIPPLPFREEIYRSSRPLRVGYYETDNYTMPTPAMRRAVMETKQSLEAAGHTLVPFLPNNIPYALEVLSAGGLFSDGGCSFLQNFKGDFVDPCLGDLVLVLKLPRWFKKLLSFLLKPLFPRLAAFLNSMCPRSAEKLWELQHEIEMYRQSVIAQWKAMNLDVVLTPMLGPALDLNTPGRATGAISYTVLYNCLDFPAGVVPVTTVTAEDDAQMEHYKGYFGDMWDNILKKGMKKGIGLPVAVQCVALPWQEELCLRFMREVERLMTPEKRPS</sequence>
<evidence type="ECO:0000250" key="1"/>
<evidence type="ECO:0000250" key="2">
    <source>
        <dbReference type="UniProtKB" id="O00519"/>
    </source>
</evidence>
<evidence type="ECO:0000250" key="3">
    <source>
        <dbReference type="UniProtKB" id="P97612"/>
    </source>
</evidence>
<evidence type="ECO:0000255" key="4"/>
<evidence type="ECO:0000269" key="5">
    <source>
    </source>
</evidence>
<evidence type="ECO:0000269" key="6">
    <source>
    </source>
</evidence>
<evidence type="ECO:0000305" key="7"/>
<evidence type="ECO:0000305" key="8">
    <source>
    </source>
</evidence>
<evidence type="ECO:0000305" key="9">
    <source>
    </source>
</evidence>
<protein>
    <recommendedName>
        <fullName>Fatty-acid amide hydrolase 1</fullName>
        <ecNumber evidence="5 6">3.5.1.99</ecNumber>
    </recommendedName>
    <alternativeName>
        <fullName>Anandamide amidohydrolase 1</fullName>
    </alternativeName>
    <alternativeName>
        <fullName>Fatty acid ester hydrolase</fullName>
        <ecNumber evidence="3">3.1.1.-</ecNumber>
    </alternativeName>
    <alternativeName>
        <fullName>Oleamide hydrolase 1</fullName>
    </alternativeName>
</protein>
<organism>
    <name type="scientific">Mus musculus</name>
    <name type="common">Mouse</name>
    <dbReference type="NCBI Taxonomy" id="10090"/>
    <lineage>
        <taxon>Eukaryota</taxon>
        <taxon>Metazoa</taxon>
        <taxon>Chordata</taxon>
        <taxon>Craniata</taxon>
        <taxon>Vertebrata</taxon>
        <taxon>Euteleostomi</taxon>
        <taxon>Mammalia</taxon>
        <taxon>Eutheria</taxon>
        <taxon>Euarchontoglires</taxon>
        <taxon>Glires</taxon>
        <taxon>Rodentia</taxon>
        <taxon>Myomorpha</taxon>
        <taxon>Muroidea</taxon>
        <taxon>Muridae</taxon>
        <taxon>Murinae</taxon>
        <taxon>Mus</taxon>
        <taxon>Mus</taxon>
    </lineage>
</organism>
<gene>
    <name type="primary">Faah</name>
    <name type="synonym">Faah1</name>
</gene>